<gene>
    <name type="ORF">Bm1_50845</name>
</gene>
<accession>A8QE76</accession>
<name>EFTS_BRUMA</name>
<proteinExistence type="inferred from homology"/>
<organism>
    <name type="scientific">Brugia malayi</name>
    <name type="common">Filarial nematode worm</name>
    <dbReference type="NCBI Taxonomy" id="6279"/>
    <lineage>
        <taxon>Eukaryota</taxon>
        <taxon>Metazoa</taxon>
        <taxon>Ecdysozoa</taxon>
        <taxon>Nematoda</taxon>
        <taxon>Chromadorea</taxon>
        <taxon>Rhabditida</taxon>
        <taxon>Spirurina</taxon>
        <taxon>Spiruromorpha</taxon>
        <taxon>Filarioidea</taxon>
        <taxon>Onchocercidae</taxon>
        <taxon>Brugia</taxon>
    </lineage>
</organism>
<dbReference type="EMBL" id="DS239431">
    <property type="protein sequence ID" value="EDP29196.1"/>
    <property type="molecule type" value="Genomic_DNA"/>
</dbReference>
<dbReference type="SMR" id="A8QE76"/>
<dbReference type="FunCoup" id="A8QE76">
    <property type="interactions" value="2306"/>
</dbReference>
<dbReference type="STRING" id="6279.A8QE76"/>
<dbReference type="EnsemblMetazoa" id="Bm4414.1">
    <property type="protein sequence ID" value="Bm4414.1"/>
    <property type="gene ID" value="WBGene00224675"/>
</dbReference>
<dbReference type="GeneID" id="6105054"/>
<dbReference type="KEGG" id="bmy:BM_BM4414"/>
<dbReference type="CTD" id="6105054"/>
<dbReference type="WormBase" id="Bm4414">
    <property type="protein sequence ID" value="BM23865"/>
    <property type="gene ID" value="WBGene00224675"/>
    <property type="gene designation" value="Bma-tsfm-1"/>
</dbReference>
<dbReference type="InParanoid" id="A8QE76"/>
<dbReference type="OMA" id="QEYMLDD"/>
<dbReference type="OrthoDB" id="277235at2759"/>
<dbReference type="Proteomes" id="UP000006672">
    <property type="component" value="Unassembled WGS sequence"/>
</dbReference>
<dbReference type="GO" id="GO:0005739">
    <property type="term" value="C:mitochondrion"/>
    <property type="evidence" value="ECO:0007669"/>
    <property type="project" value="UniProtKB-SubCell"/>
</dbReference>
<dbReference type="GO" id="GO:0003746">
    <property type="term" value="F:translation elongation factor activity"/>
    <property type="evidence" value="ECO:0007669"/>
    <property type="project" value="UniProtKB-UniRule"/>
</dbReference>
<dbReference type="GO" id="GO:0070125">
    <property type="term" value="P:mitochondrial translational elongation"/>
    <property type="evidence" value="ECO:0007669"/>
    <property type="project" value="TreeGrafter"/>
</dbReference>
<dbReference type="CDD" id="cd14275">
    <property type="entry name" value="UBA_EF-Ts"/>
    <property type="match status" value="1"/>
</dbReference>
<dbReference type="Gene3D" id="1.10.8.10">
    <property type="entry name" value="DNA helicase RuvA subunit, C-terminal domain"/>
    <property type="match status" value="1"/>
</dbReference>
<dbReference type="Gene3D" id="3.30.479.20">
    <property type="entry name" value="Elongation factor Ts, dimerisation domain"/>
    <property type="match status" value="2"/>
</dbReference>
<dbReference type="HAMAP" id="MF_00050">
    <property type="entry name" value="EF_Ts"/>
    <property type="match status" value="1"/>
</dbReference>
<dbReference type="InterPro" id="IPR036402">
    <property type="entry name" value="EF-Ts_dimer_sf"/>
</dbReference>
<dbReference type="InterPro" id="IPR001816">
    <property type="entry name" value="Transl_elong_EFTs/EF1B"/>
</dbReference>
<dbReference type="InterPro" id="IPR014039">
    <property type="entry name" value="Transl_elong_EFTs/EF1B_dimer"/>
</dbReference>
<dbReference type="InterPro" id="IPR018101">
    <property type="entry name" value="Transl_elong_Ts_CS"/>
</dbReference>
<dbReference type="InterPro" id="IPR009060">
    <property type="entry name" value="UBA-like_sf"/>
</dbReference>
<dbReference type="NCBIfam" id="TIGR00116">
    <property type="entry name" value="tsf"/>
    <property type="match status" value="1"/>
</dbReference>
<dbReference type="PANTHER" id="PTHR11741">
    <property type="entry name" value="ELONGATION FACTOR TS"/>
    <property type="match status" value="1"/>
</dbReference>
<dbReference type="PANTHER" id="PTHR11741:SF0">
    <property type="entry name" value="ELONGATION FACTOR TS, MITOCHONDRIAL"/>
    <property type="match status" value="1"/>
</dbReference>
<dbReference type="Pfam" id="PF25025">
    <property type="entry name" value="EF-Ts_N"/>
    <property type="match status" value="1"/>
</dbReference>
<dbReference type="Pfam" id="PF00889">
    <property type="entry name" value="EF_TS"/>
    <property type="match status" value="1"/>
</dbReference>
<dbReference type="SUPFAM" id="SSF54713">
    <property type="entry name" value="Elongation factor Ts (EF-Ts), dimerisation domain"/>
    <property type="match status" value="2"/>
</dbReference>
<dbReference type="SUPFAM" id="SSF46934">
    <property type="entry name" value="UBA-like"/>
    <property type="match status" value="1"/>
</dbReference>
<dbReference type="PROSITE" id="PS01127">
    <property type="entry name" value="EF_TS_2"/>
    <property type="match status" value="1"/>
</dbReference>
<feature type="transit peptide" description="Mitochondrion" evidence="1">
    <location>
        <begin position="1"/>
        <end position="14"/>
    </location>
</feature>
<feature type="chain" id="PRO_0000402320" description="Elongation factor Ts, mitochondrial">
    <location>
        <begin position="15"/>
        <end position="331"/>
    </location>
</feature>
<protein>
    <recommendedName>
        <fullName evidence="1">Elongation factor Ts, mitochondrial</fullName>
        <shortName evidence="1">EF-Ts</shortName>
        <shortName evidence="1">EF-TsMt</shortName>
    </recommendedName>
</protein>
<keyword id="KW-0251">Elongation factor</keyword>
<keyword id="KW-0496">Mitochondrion</keyword>
<keyword id="KW-0648">Protein biosynthesis</keyword>
<keyword id="KW-1185">Reference proteome</keyword>
<keyword id="KW-0809">Transit peptide</keyword>
<evidence type="ECO:0000255" key="1">
    <source>
        <dbReference type="HAMAP-Rule" id="MF_03135"/>
    </source>
</evidence>
<sequence length="331" mass="36859">MIVSRQVIRSVVRKSFNRLCSANVVALPSGSTKEALKELRRKTGYSYVNCRKALNEFGPDNLDEAIKWLKKRAIEEGWEKAAKLGDRPTRQGIVSVMTKGNKAAIVELNCETDFVSRNEDFKRLVEDVTKAVLHAADRDGTSTHGFELLNSNINSLKTSENGMLVKDLITEAIGRLGENITLSRAQLILAPPNVQLFGYAHPKEGTDRVYMGRYVSVVGLKGSNKTDFPTEKLGFQLCQHVVGMRSLTLGTPLPVKKTSVKDEVSQDDEINAFYNGEVTHIDENETQLLRQSFMLNPSQTVHEYVTGHGASIVDFYRTELSSNVSEESFQS</sequence>
<comment type="function">
    <text evidence="1">Associates with the EF-Tu.GDP complex and induces the exchange of GDP to GTP. It remains bound to the aminoacyl-tRNA.EF-Tu.GTP complex up to the GTP hydrolysis stage on the ribosome.</text>
</comment>
<comment type="subcellular location">
    <subcellularLocation>
        <location evidence="1">Mitochondrion</location>
    </subcellularLocation>
</comment>
<comment type="similarity">
    <text evidence="1">Belongs to the EF-Ts family.</text>
</comment>
<reference key="1">
    <citation type="journal article" date="2007" name="Science">
        <title>Draft genome of the filarial nematode parasite Brugia malayi.</title>
        <authorList>
            <person name="Ghedin E."/>
            <person name="Wang S."/>
            <person name="Spiro D."/>
            <person name="Caler E."/>
            <person name="Zhao Q."/>
            <person name="Crabtree J."/>
            <person name="Allen J.E."/>
            <person name="Delcher A.L."/>
            <person name="Guiliano D.B."/>
            <person name="Miranda-Saavedra D."/>
            <person name="Angiuoli S.V."/>
            <person name="Creasy T."/>
            <person name="Amedeo P."/>
            <person name="Haas B."/>
            <person name="El-Sayed N.M."/>
            <person name="Wortman J.R."/>
            <person name="Feldblyum T."/>
            <person name="Tallon L."/>
            <person name="Schatz M."/>
            <person name="Shumway M."/>
            <person name="Koo H."/>
            <person name="Salzberg S.L."/>
            <person name="Schobel S."/>
            <person name="Pertea M."/>
            <person name="Pop M."/>
            <person name="White O."/>
            <person name="Barton G.J."/>
            <person name="Carlow C.K.S."/>
            <person name="Crawford M.J."/>
            <person name="Daub J."/>
            <person name="Dimmic M.W."/>
            <person name="Estes C.F."/>
            <person name="Foster J.M."/>
            <person name="Ganatra M."/>
            <person name="Gregory W.F."/>
            <person name="Johnson N.M."/>
            <person name="Jin J."/>
            <person name="Komuniecki R."/>
            <person name="Korf I."/>
            <person name="Kumar S."/>
            <person name="Laney S."/>
            <person name="Li B.-W."/>
            <person name="Li W."/>
            <person name="Lindblom T.H."/>
            <person name="Lustigman S."/>
            <person name="Ma D."/>
            <person name="Maina C.V."/>
            <person name="Martin D.M."/>
            <person name="McCarter J.P."/>
            <person name="McReynolds L."/>
            <person name="Mitreva M."/>
            <person name="Nutman T.B."/>
            <person name="Parkinson J."/>
            <person name="Peregrin-Alvarez J.M."/>
            <person name="Poole C."/>
            <person name="Ren Q."/>
            <person name="Saunders L."/>
            <person name="Sluder A.E."/>
            <person name="Smith K."/>
            <person name="Stanke M."/>
            <person name="Unnasch T.R."/>
            <person name="Ware J."/>
            <person name="Wei A.D."/>
            <person name="Weil G."/>
            <person name="Williams D.J."/>
            <person name="Zhang Y."/>
            <person name="Williams S.A."/>
            <person name="Fraser-Liggett C."/>
            <person name="Slatko B."/>
            <person name="Blaxter M.L."/>
            <person name="Scott A.L."/>
        </authorList>
    </citation>
    <scope>NUCLEOTIDE SEQUENCE [LARGE SCALE GENOMIC DNA]</scope>
</reference>